<evidence type="ECO:0000250" key="1">
    <source>
        <dbReference type="UniProtKB" id="P80368"/>
    </source>
</evidence>
<evidence type="ECO:0000269" key="2">
    <source>
    </source>
</evidence>
<evidence type="ECO:0000303" key="3">
    <source>
    </source>
</evidence>
<evidence type="ECO:0000305" key="4"/>
<protein>
    <recommendedName>
        <fullName>Major outer membrane protein</fullName>
        <shortName>MOMP</shortName>
    </recommendedName>
    <alternativeName>
        <fullName>Outer membrane protein H</fullName>
    </alternativeName>
</protein>
<organism evidence="4">
    <name type="scientific">Avibacterium volantium</name>
    <name type="common">Pasteurella volantium</name>
    <dbReference type="NCBI Taxonomy" id="762"/>
    <lineage>
        <taxon>Bacteria</taxon>
        <taxon>Pseudomonadati</taxon>
        <taxon>Pseudomonadota</taxon>
        <taxon>Gammaproteobacteria</taxon>
        <taxon>Pasteurellales</taxon>
        <taxon>Pasteurellaceae</taxon>
        <taxon>Avibacterium</taxon>
    </lineage>
</organism>
<feature type="chain" id="PRO_0000182821" description="Major outer membrane protein">
    <location>
        <begin position="1"/>
        <end position="22" status="greater than"/>
    </location>
</feature>
<feature type="non-terminal residue" evidence="3">
    <location>
        <position position="22"/>
    </location>
</feature>
<sequence length="22" mass="2268">ATVYNNDGTQVDVGGRFDVALG</sequence>
<keyword id="KW-0998">Cell outer membrane</keyword>
<keyword id="KW-0903">Direct protein sequencing</keyword>
<keyword id="KW-1015">Disulfide bond</keyword>
<keyword id="KW-0406">Ion transport</keyword>
<keyword id="KW-0472">Membrane</keyword>
<keyword id="KW-0626">Porin</keyword>
<keyword id="KW-0812">Transmembrane</keyword>
<keyword id="KW-1134">Transmembrane beta strand</keyword>
<keyword id="KW-0813">Transport</keyword>
<dbReference type="GO" id="GO:0009279">
    <property type="term" value="C:cell outer membrane"/>
    <property type="evidence" value="ECO:0007669"/>
    <property type="project" value="UniProtKB-SubCell"/>
</dbReference>
<dbReference type="GO" id="GO:0046930">
    <property type="term" value="C:pore complex"/>
    <property type="evidence" value="ECO:0007669"/>
    <property type="project" value="UniProtKB-KW"/>
</dbReference>
<dbReference type="GO" id="GO:0015288">
    <property type="term" value="F:porin activity"/>
    <property type="evidence" value="ECO:0007669"/>
    <property type="project" value="UniProtKB-KW"/>
</dbReference>
<dbReference type="GO" id="GO:0006811">
    <property type="term" value="P:monoatomic ion transport"/>
    <property type="evidence" value="ECO:0007669"/>
    <property type="project" value="UniProtKB-KW"/>
</dbReference>
<proteinExistence type="evidence at protein level"/>
<reference evidence="4" key="1">
    <citation type="journal article" date="1996" name="Zentralbl. Bakteriol.">
        <title>A comparative study of the major outer membrane proteins of the avian haemophili and Pasteurella gallinarum.</title>
        <authorList>
            <person name="Hartmann L."/>
            <person name="Schroeder W."/>
            <person name="Luebke-Becker A."/>
        </authorList>
    </citation>
    <scope>PROTEIN SEQUENCE</scope>
    <scope>SUBCELLULAR LOCATION</scope>
    <source>
        <strain>IDPH 780</strain>
    </source>
</reference>
<accession>P80452</accession>
<name>OMPH_AVIVO</name>
<comment type="function">
    <text evidence="1">Structural rigidity of the outer membrane of elementary bodies and porin forming, permitting diffusion of solutes through the intracellular reticulate body membrane.</text>
</comment>
<comment type="subunit">
    <text evidence="1">Disulfide bond interactions within and between MOMP molecules and other components form high molecular-weight oligomers.</text>
</comment>
<comment type="subcellular location">
    <subcellularLocation>
        <location evidence="2">Cell outer membrane</location>
        <topology evidence="2">Multi-pass membrane protein</topology>
    </subcellularLocation>
</comment>
<comment type="similarity">
    <text evidence="4">Belongs to the Gram-negative porin family.</text>
</comment>
<gene>
    <name type="primary">ompH</name>
</gene>